<dbReference type="EMBL" id="GU785070">
    <property type="protein sequence ID" value="ADE45320.1"/>
    <property type="molecule type" value="mRNA"/>
</dbReference>
<dbReference type="EMBL" id="AADG06003262">
    <property type="status" value="NOT_ANNOTATED_CDS"/>
    <property type="molecule type" value="Genomic_DNA"/>
</dbReference>
<dbReference type="RefSeq" id="NP_001161181.1">
    <property type="nucleotide sequence ID" value="NM_001167709.1"/>
</dbReference>
<dbReference type="FunCoup" id="P85797">
    <property type="interactions" value="12"/>
</dbReference>
<dbReference type="STRING" id="7460.P85797"/>
<dbReference type="PaxDb" id="7460-GB47928-PA"/>
<dbReference type="EnsemblMetazoa" id="NM_001167709">
    <property type="protein sequence ID" value="NP_001161181"/>
    <property type="gene ID" value="GeneID_724880"/>
</dbReference>
<dbReference type="GeneID" id="724880"/>
<dbReference type="KEGG" id="ame:724880"/>
<dbReference type="CTD" id="100679594"/>
<dbReference type="eggNOG" id="ENOG502S9TT">
    <property type="taxonomic scope" value="Eukaryota"/>
</dbReference>
<dbReference type="HOGENOM" id="CLU_111722_0_0_1"/>
<dbReference type="InParanoid" id="P85797"/>
<dbReference type="OMA" id="EKRAYAY"/>
<dbReference type="OrthoDB" id="10067964at2759"/>
<dbReference type="PhylomeDB" id="P85797"/>
<dbReference type="Proteomes" id="UP000005203">
    <property type="component" value="Linkage group LG8"/>
</dbReference>
<dbReference type="GO" id="GO:0005576">
    <property type="term" value="C:extracellular region"/>
    <property type="evidence" value="ECO:0007669"/>
    <property type="project" value="UniProtKB-SubCell"/>
</dbReference>
<dbReference type="GO" id="GO:0007218">
    <property type="term" value="P:neuropeptide signaling pathway"/>
    <property type="evidence" value="ECO:0007669"/>
    <property type="project" value="UniProtKB-KW"/>
</dbReference>
<evidence type="ECO:0000250" key="1">
    <source>
        <dbReference type="UniProtKB" id="P12764"/>
    </source>
</evidence>
<evidence type="ECO:0000255" key="2"/>
<evidence type="ECO:0000256" key="3">
    <source>
        <dbReference type="SAM" id="MobiDB-lite"/>
    </source>
</evidence>
<evidence type="ECO:0000269" key="4">
    <source>
    </source>
</evidence>
<evidence type="ECO:0000305" key="5"/>
<accession>P85797</accession>
<accession>D5L5R2</accession>
<name>ALLS_APIME</name>
<keyword id="KW-0027">Amidation</keyword>
<keyword id="KW-0165">Cleavage on pair of basic residues</keyword>
<keyword id="KW-0903">Direct protein sequencing</keyword>
<keyword id="KW-0527">Neuropeptide</keyword>
<keyword id="KW-1185">Reference proteome</keyword>
<keyword id="KW-0964">Secreted</keyword>
<keyword id="KW-0732">Signal</keyword>
<proteinExistence type="evidence at protein level"/>
<comment type="function">
    <text evidence="1">Neuropeptides.</text>
</comment>
<comment type="subcellular location">
    <subcellularLocation>
        <location evidence="1">Secreted</location>
    </subcellularLocation>
</comment>
<comment type="mass spectrometry" mass="994.43" method="Electrospray" evidence="4">
    <molecule>Allatostatin-1</molecule>
</comment>
<comment type="mass spectrometry" mass="920.51" method="Electrospray" evidence="4">
    <molecule>Allatostatin-2a</molecule>
</comment>
<comment type="mass spectrometry" mass="751.39" method="Electrospray" evidence="4">
    <molecule>Allatostatin-2b</molecule>
</comment>
<comment type="mass spectrometry" mass="912.45" method="Electrospray" evidence="4">
    <molecule>Allatostatin-3</molecule>
</comment>
<comment type="mass spectrometry" mass="868.46" method="Electrospray" evidence="4">
    <molecule>Allatostatin-4</molecule>
</comment>
<comment type="mass spectrometry" mass="3992.8" method="Electrospray" evidence="4">
    <molecule>Allatostatin-5</molecule>
</comment>
<comment type="mass spectrometry" mass="1022.53" method="Electrospray" evidence="4">
    <molecule>Allatostatin-6</molecule>
</comment>
<comment type="mass spectrometry" mass="3013.51" method="Electrospray" evidence="4">
    <molecule>Allatostatin-7a</molecule>
</comment>
<comment type="mass spectrometry" mass="1171.56" method="Electrospray" evidence="4">
    <molecule>Allatostatin-7b</molecule>
</comment>
<comment type="mass spectrometry" mass="1575.76" method="Electrospray" evidence="4">
    <molecule>Allatostatin-7c</molecule>
</comment>
<comment type="similarity">
    <text evidence="2">Belongs to the allatostatin family.</text>
</comment>
<feature type="signal peptide" evidence="2">
    <location>
        <begin position="1"/>
        <end position="27"/>
    </location>
</feature>
<feature type="propeptide" id="PRO_0000341452" evidence="4">
    <location>
        <begin position="28"/>
        <end position="56"/>
    </location>
</feature>
<feature type="peptide" id="PRO_0000341453" description="Allatostatin-1" evidence="4">
    <location>
        <begin position="59"/>
        <end position="66"/>
    </location>
</feature>
<feature type="peptide" id="PRO_0000341454" description="Allatostatin-2a" evidence="4">
    <location>
        <begin position="69"/>
        <end position="76"/>
    </location>
</feature>
<feature type="peptide" id="PRO_0000341455" description="Allatostatin-2b" evidence="4">
    <location>
        <begin position="69"/>
        <end position="74"/>
    </location>
</feature>
<feature type="propeptide" id="PRO_0000341456" evidence="4">
    <location>
        <begin position="80"/>
        <end position="86"/>
    </location>
</feature>
<feature type="peptide" id="PRO_0000341457" description="Allatostatin-3" evidence="4">
    <location>
        <begin position="89"/>
        <end position="96"/>
    </location>
</feature>
<feature type="peptide" id="PRO_0000341458" description="Allatostatin-4" evidence="4">
    <location>
        <begin position="100"/>
        <end position="106"/>
    </location>
</feature>
<feature type="peptide" id="PRO_0000341459" description="Allatostatin-5" evidence="4">
    <location>
        <begin position="110"/>
        <end position="143"/>
    </location>
</feature>
<feature type="peptide" id="PRO_0000341460" description="Allatostatin-6" evidence="4">
    <location>
        <begin position="146"/>
        <end position="154"/>
    </location>
</feature>
<feature type="peptide" id="PRO_0000341461" description="Allatostatin-7a" evidence="4">
    <location>
        <begin position="158"/>
        <end position="184"/>
    </location>
</feature>
<feature type="peptide" id="PRO_0000341462" description="Allatostatin-7b" evidence="4">
    <location>
        <begin position="158"/>
        <end position="169"/>
    </location>
</feature>
<feature type="peptide" id="PRO_0000341463" description="Allatostatin-7c" evidence="4">
    <location>
        <begin position="172"/>
        <end position="184"/>
    </location>
</feature>
<feature type="propeptide" id="PRO_0000341464" evidence="4">
    <location>
        <begin position="188"/>
        <end position="197"/>
    </location>
</feature>
<feature type="region of interest" description="Disordered" evidence="3">
    <location>
        <begin position="161"/>
        <end position="197"/>
    </location>
</feature>
<feature type="modified residue" description="Isoleucine amide" evidence="4">
    <location>
        <position position="76"/>
    </location>
</feature>
<feature type="modified residue" description="Leucine amide" evidence="4">
    <location>
        <position position="96"/>
    </location>
</feature>
<feature type="modified residue" description="Leucine amide" evidence="4">
    <location>
        <position position="106"/>
    </location>
</feature>
<feature type="modified residue" description="Leucine amide" evidence="4">
    <location>
        <position position="154"/>
    </location>
</feature>
<feature type="modified residue" description="Leucine amide" evidence="4">
    <location>
        <position position="184"/>
    </location>
</feature>
<reference evidence="5" key="1">
    <citation type="submission" date="2010-02" db="EMBL/GenBank/DDBJ databases">
        <authorList>
            <person name="Silva-Torres F.A."/>
            <person name="Nunes F.M.F."/>
            <person name="Simoes Z.L.P."/>
        </authorList>
    </citation>
    <scope>NUCLEOTIDE SEQUENCE [MRNA]</scope>
</reference>
<reference evidence="5" key="2">
    <citation type="submission" date="2010-11" db="EMBL/GenBank/DDBJ databases">
        <authorList>
            <consortium name="Honey bee genome project"/>
            <person name="Zhang L."/>
            <person name="Deng J."/>
            <person name="Wu Y.-Q."/>
            <person name="Kovar C."/>
            <person name="Aqrawi P."/>
            <person name="Bandaranaike D."/>
            <person name="Blankenburg K."/>
            <person name="Chen D."/>
            <person name="Denson S."/>
            <person name="Dinh H."/>
            <person name="Firestine M."/>
            <person name="Gross S."/>
            <person name="Han Y."/>
            <person name="Hernandez B."/>
            <person name="Holder M."/>
            <person name="Jackson L."/>
            <person name="Javaid M."/>
            <person name="Jing C."/>
            <person name="Jones J."/>
            <person name="Joshi V."/>
            <person name="Kamau G."/>
            <person name="Korchina V."/>
            <person name="Lee S."/>
            <person name="Lorensuhewa L."/>
            <person name="Mata R."/>
            <person name="Mathew T."/>
            <person name="Mims S."/>
            <person name="Ngo R."/>
            <person name="Nguyen L."/>
            <person name="Okwuonu G."/>
            <person name="Ongeri F."/>
            <person name="Osuji N."/>
            <person name="Pham C."/>
            <person name="Puazo M."/>
            <person name="Qu C."/>
            <person name="Quiroz J."/>
            <person name="Raj R."/>
            <person name="Rio Deiros D."/>
            <person name="Santibanez J."/>
            <person name="Scheel M."/>
            <person name="Scherer S."/>
            <person name="Vee V."/>
            <person name="Wang M."/>
            <person name="Xin Y."/>
            <person name="Richards S."/>
            <person name="Reid J.G."/>
            <person name="Newsham I."/>
            <person name="Worley K.C."/>
            <person name="Muzny D.M."/>
            <person name="Gibbs R."/>
        </authorList>
    </citation>
    <scope>NUCLEOTIDE SEQUENCE [LARGE SCALE GENOMIC DNA]</scope>
    <source>
        <strain>DH4</strain>
    </source>
</reference>
<reference evidence="5" key="3">
    <citation type="journal article" date="2006" name="Science">
        <title>From the genome to the proteome: uncovering peptides in the Apis brain.</title>
        <authorList>
            <person name="Hummon A.B."/>
            <person name="Richmond T.A."/>
            <person name="Verleyen P."/>
            <person name="Baggerman G."/>
            <person name="Huybrechts J."/>
            <person name="Ewing M.A."/>
            <person name="Vierstraete E."/>
            <person name="Rodriguez-Zas S.L."/>
            <person name="Schoofs L."/>
            <person name="Robinson G.E."/>
            <person name="Sweedler J.V."/>
        </authorList>
    </citation>
    <scope>PROTEIN SEQUENCE OF 59-66; 69-76; 89-96; 100-106; 110-143; 146-154 AND 158-184</scope>
    <scope>MASS SPECTROMETRY</scope>
    <scope>AMIDATION AT ILE-76; LEU-96; LEU-106; LEU-154 AND LEU-184</scope>
    <source>
        <tissue evidence="4">Brain</tissue>
    </source>
</reference>
<sequence length="197" mass="22787">MRSRTSVLTSSLAFLYFFGIVGRSALAMEETPASSMNLQHYNNMLNPMVFDDTMPEKRAYTYVSEYKRLPVYNFGIGKRWIDTNDNKRGRDYSFGLGKRRQYSFGLGKRNDNADYPLRLNLDYLPVDNPAFHSQENTDDFLEEKRGRQPYSFGLGKRAVHYSGGQPLGSKRPNDMLSQRYHFGLGKRMSEDEEESSQ</sequence>
<organism>
    <name type="scientific">Apis mellifera</name>
    <name type="common">Honeybee</name>
    <dbReference type="NCBI Taxonomy" id="7460"/>
    <lineage>
        <taxon>Eukaryota</taxon>
        <taxon>Metazoa</taxon>
        <taxon>Ecdysozoa</taxon>
        <taxon>Arthropoda</taxon>
        <taxon>Hexapoda</taxon>
        <taxon>Insecta</taxon>
        <taxon>Pterygota</taxon>
        <taxon>Neoptera</taxon>
        <taxon>Endopterygota</taxon>
        <taxon>Hymenoptera</taxon>
        <taxon>Apocrita</taxon>
        <taxon>Aculeata</taxon>
        <taxon>Apoidea</taxon>
        <taxon>Anthophila</taxon>
        <taxon>Apidae</taxon>
        <taxon>Apis</taxon>
    </lineage>
</organism>
<protein>
    <recommendedName>
        <fullName>Allatostatins</fullName>
    </recommendedName>
    <component>
        <recommendedName>
            <fullName>Allatostatin-1</fullName>
            <shortName>AST1</shortName>
        </recommendedName>
    </component>
    <component>
        <recommendedName>
            <fullName>Allatostatin-2a</fullName>
            <shortName>AST2a</shortName>
        </recommendedName>
    </component>
    <component>
        <recommendedName>
            <fullName>Allatostatin-2b</fullName>
            <shortName>AST2b</shortName>
        </recommendedName>
    </component>
    <component>
        <recommendedName>
            <fullName>Allatostatin-3</fullName>
            <shortName>AST3</shortName>
        </recommendedName>
    </component>
    <component>
        <recommendedName>
            <fullName>Allatostatin-4</fullName>
            <shortName>AST4</shortName>
        </recommendedName>
    </component>
    <component>
        <recommendedName>
            <fullName>Allatostatin-5</fullName>
            <shortName>AST5</shortName>
        </recommendedName>
    </component>
    <component>
        <recommendedName>
            <fullName>Allatostatin-6</fullName>
            <shortName>AST6</shortName>
        </recommendedName>
    </component>
    <component>
        <recommendedName>
            <fullName>Allatostatin-7a</fullName>
            <shortName>AST7a</shortName>
        </recommendedName>
    </component>
    <component>
        <recommendedName>
            <fullName>Allatostatin-7b</fullName>
            <shortName>AST7b</shortName>
        </recommendedName>
    </component>
    <component>
        <recommendedName>
            <fullName>Allatostatin-7c</fullName>
            <shortName>AST7c</shortName>
        </recommendedName>
    </component>
</protein>